<reference key="1">
    <citation type="journal article" date="2010" name="J. Bacteriol.">
        <title>The genetic basis of laboratory adaptation in Caulobacter crescentus.</title>
        <authorList>
            <person name="Marks M.E."/>
            <person name="Castro-Rojas C.M."/>
            <person name="Teiling C."/>
            <person name="Du L."/>
            <person name="Kapatral V."/>
            <person name="Walunas T.L."/>
            <person name="Crosson S."/>
        </authorList>
    </citation>
    <scope>NUCLEOTIDE SEQUENCE [LARGE SCALE GENOMIC DNA]</scope>
    <source>
        <strain>NA1000 / CB15N</strain>
    </source>
</reference>
<organism>
    <name type="scientific">Caulobacter vibrioides (strain NA1000 / CB15N)</name>
    <name type="common">Caulobacter crescentus</name>
    <dbReference type="NCBI Taxonomy" id="565050"/>
    <lineage>
        <taxon>Bacteria</taxon>
        <taxon>Pseudomonadati</taxon>
        <taxon>Pseudomonadota</taxon>
        <taxon>Alphaproteobacteria</taxon>
        <taxon>Caulobacterales</taxon>
        <taxon>Caulobacteraceae</taxon>
        <taxon>Caulobacter</taxon>
    </lineage>
</organism>
<proteinExistence type="inferred from homology"/>
<protein>
    <recommendedName>
        <fullName evidence="1">Ubiquinone/menaquinone biosynthesis C-methyltransferase UbiE</fullName>
        <ecNumber evidence="1">2.1.1.163</ecNumber>
        <ecNumber evidence="1">2.1.1.201</ecNumber>
    </recommendedName>
    <alternativeName>
        <fullName evidence="1">2-methoxy-6-polyprenyl-1,4-benzoquinol methylase</fullName>
    </alternativeName>
    <alternativeName>
        <fullName evidence="1">Demethylmenaquinone methyltransferase</fullName>
    </alternativeName>
</protein>
<name>UBIE_CAUVN</name>
<sequence length="252" mass="27747">MSNTSASFGFKDVDASLKAGLVRGVFDRVAKNYDIMNDLMSGGVHRLWKDAVAARLNPQPGEVIIDCAGGTGDMARRFAKMARKAQERRGGPDATINIVDYNAEMIMAGIERGGEPEITWTVGDAQRLPLPDAYADAYVISFGIRNVTDINAALREARRVLKPGGRFLCLEFSRPVTEPLAKAYDAYSFKVIPQVGEWVAKDRDAYQYLVESIRRFPDQRTFAGMIEAAGFKRVTFTNFTGGVAALHQGWAI</sequence>
<evidence type="ECO:0000255" key="1">
    <source>
        <dbReference type="HAMAP-Rule" id="MF_01813"/>
    </source>
</evidence>
<comment type="function">
    <text evidence="1">Methyltransferase required for the conversion of demethylmenaquinol (DMKH2) to menaquinol (MKH2) and the conversion of 2-polyprenyl-6-methoxy-1,4-benzoquinol (DDMQH2) to 2-polyprenyl-3-methyl-6-methoxy-1,4-benzoquinol (DMQH2).</text>
</comment>
<comment type="catalytic activity">
    <reaction evidence="1">
        <text>a 2-demethylmenaquinol + S-adenosyl-L-methionine = a menaquinol + S-adenosyl-L-homocysteine + H(+)</text>
        <dbReference type="Rhea" id="RHEA:42640"/>
        <dbReference type="Rhea" id="RHEA-COMP:9539"/>
        <dbReference type="Rhea" id="RHEA-COMP:9563"/>
        <dbReference type="ChEBI" id="CHEBI:15378"/>
        <dbReference type="ChEBI" id="CHEBI:18151"/>
        <dbReference type="ChEBI" id="CHEBI:55437"/>
        <dbReference type="ChEBI" id="CHEBI:57856"/>
        <dbReference type="ChEBI" id="CHEBI:59789"/>
        <dbReference type="EC" id="2.1.1.163"/>
    </reaction>
</comment>
<comment type="catalytic activity">
    <reaction evidence="1">
        <text>a 2-methoxy-6-(all-trans-polyprenyl)benzene-1,4-diol + S-adenosyl-L-methionine = a 5-methoxy-2-methyl-3-(all-trans-polyprenyl)benzene-1,4-diol + S-adenosyl-L-homocysteine + H(+)</text>
        <dbReference type="Rhea" id="RHEA:28286"/>
        <dbReference type="Rhea" id="RHEA-COMP:10858"/>
        <dbReference type="Rhea" id="RHEA-COMP:10859"/>
        <dbReference type="ChEBI" id="CHEBI:15378"/>
        <dbReference type="ChEBI" id="CHEBI:57856"/>
        <dbReference type="ChEBI" id="CHEBI:59789"/>
        <dbReference type="ChEBI" id="CHEBI:84166"/>
        <dbReference type="ChEBI" id="CHEBI:84167"/>
        <dbReference type="EC" id="2.1.1.201"/>
    </reaction>
</comment>
<comment type="pathway">
    <text evidence="1">Quinol/quinone metabolism; menaquinone biosynthesis; menaquinol from 1,4-dihydroxy-2-naphthoate: step 2/2.</text>
</comment>
<comment type="pathway">
    <text evidence="1">Cofactor biosynthesis; ubiquinone biosynthesis.</text>
</comment>
<comment type="similarity">
    <text evidence="1">Belongs to the class I-like SAM-binding methyltransferase superfamily. MenG/UbiE family.</text>
</comment>
<keyword id="KW-0474">Menaquinone biosynthesis</keyword>
<keyword id="KW-0489">Methyltransferase</keyword>
<keyword id="KW-1185">Reference proteome</keyword>
<keyword id="KW-0949">S-adenosyl-L-methionine</keyword>
<keyword id="KW-0808">Transferase</keyword>
<keyword id="KW-0831">Ubiquinone biosynthesis</keyword>
<feature type="chain" id="PRO_1000187742" description="Ubiquinone/menaquinone biosynthesis C-methyltransferase UbiE">
    <location>
        <begin position="1"/>
        <end position="252"/>
    </location>
</feature>
<feature type="binding site" evidence="1">
    <location>
        <position position="71"/>
    </location>
    <ligand>
        <name>S-adenosyl-L-methionine</name>
        <dbReference type="ChEBI" id="CHEBI:59789"/>
    </ligand>
</feature>
<feature type="binding site" evidence="1">
    <location>
        <position position="100"/>
    </location>
    <ligand>
        <name>S-adenosyl-L-methionine</name>
        <dbReference type="ChEBI" id="CHEBI:59789"/>
    </ligand>
</feature>
<feature type="binding site" evidence="1">
    <location>
        <begin position="124"/>
        <end position="125"/>
    </location>
    <ligand>
        <name>S-adenosyl-L-methionine</name>
        <dbReference type="ChEBI" id="CHEBI:59789"/>
    </ligand>
</feature>
<feature type="binding site" evidence="1">
    <location>
        <position position="141"/>
    </location>
    <ligand>
        <name>S-adenosyl-L-methionine</name>
        <dbReference type="ChEBI" id="CHEBI:59789"/>
    </ligand>
</feature>
<accession>B8GVY5</accession>
<gene>
    <name evidence="1" type="primary">ubiE</name>
    <name type="ordered locus">CCNA_03823</name>
</gene>
<dbReference type="EC" id="2.1.1.163" evidence="1"/>
<dbReference type="EC" id="2.1.1.201" evidence="1"/>
<dbReference type="EMBL" id="CP001340">
    <property type="protein sequence ID" value="ACL97288.1"/>
    <property type="molecule type" value="Genomic_DNA"/>
</dbReference>
<dbReference type="RefSeq" id="WP_010921535.1">
    <property type="nucleotide sequence ID" value="NC_011916.1"/>
</dbReference>
<dbReference type="RefSeq" id="YP_002519196.1">
    <property type="nucleotide sequence ID" value="NC_011916.1"/>
</dbReference>
<dbReference type="SMR" id="B8GVY5"/>
<dbReference type="GeneID" id="7332021"/>
<dbReference type="KEGG" id="ccs:CCNA_03823"/>
<dbReference type="PATRIC" id="fig|565050.3.peg.3728"/>
<dbReference type="HOGENOM" id="CLU_037990_0_0_5"/>
<dbReference type="OrthoDB" id="9808140at2"/>
<dbReference type="PhylomeDB" id="B8GVY5"/>
<dbReference type="UniPathway" id="UPA00079">
    <property type="reaction ID" value="UER00169"/>
</dbReference>
<dbReference type="UniPathway" id="UPA00232"/>
<dbReference type="Proteomes" id="UP000001364">
    <property type="component" value="Chromosome"/>
</dbReference>
<dbReference type="GO" id="GO:0008425">
    <property type="term" value="F:2-methoxy-6-polyprenyl-1,4-benzoquinol methyltransferase activity"/>
    <property type="evidence" value="ECO:0007669"/>
    <property type="project" value="UniProtKB-UniRule"/>
</dbReference>
<dbReference type="GO" id="GO:0043770">
    <property type="term" value="F:demethylmenaquinone methyltransferase activity"/>
    <property type="evidence" value="ECO:0007669"/>
    <property type="project" value="UniProtKB-UniRule"/>
</dbReference>
<dbReference type="GO" id="GO:0009060">
    <property type="term" value="P:aerobic respiration"/>
    <property type="evidence" value="ECO:0007669"/>
    <property type="project" value="UniProtKB-UniRule"/>
</dbReference>
<dbReference type="GO" id="GO:0009234">
    <property type="term" value="P:menaquinone biosynthetic process"/>
    <property type="evidence" value="ECO:0007669"/>
    <property type="project" value="UniProtKB-UniRule"/>
</dbReference>
<dbReference type="GO" id="GO:0032259">
    <property type="term" value="P:methylation"/>
    <property type="evidence" value="ECO:0007669"/>
    <property type="project" value="UniProtKB-KW"/>
</dbReference>
<dbReference type="CDD" id="cd02440">
    <property type="entry name" value="AdoMet_MTases"/>
    <property type="match status" value="1"/>
</dbReference>
<dbReference type="Gene3D" id="3.40.50.150">
    <property type="entry name" value="Vaccinia Virus protein VP39"/>
    <property type="match status" value="1"/>
</dbReference>
<dbReference type="HAMAP" id="MF_01813">
    <property type="entry name" value="MenG_UbiE_methyltr"/>
    <property type="match status" value="1"/>
</dbReference>
<dbReference type="InterPro" id="IPR029063">
    <property type="entry name" value="SAM-dependent_MTases_sf"/>
</dbReference>
<dbReference type="InterPro" id="IPR004033">
    <property type="entry name" value="UbiE/COQ5_MeTrFase"/>
</dbReference>
<dbReference type="InterPro" id="IPR023576">
    <property type="entry name" value="UbiE/COQ5_MeTrFase_CS"/>
</dbReference>
<dbReference type="NCBIfam" id="TIGR01934">
    <property type="entry name" value="MenG_MenH_UbiE"/>
    <property type="match status" value="1"/>
</dbReference>
<dbReference type="PANTHER" id="PTHR43591:SF24">
    <property type="entry name" value="2-METHOXY-6-POLYPRENYL-1,4-BENZOQUINOL METHYLASE, MITOCHONDRIAL"/>
    <property type="match status" value="1"/>
</dbReference>
<dbReference type="PANTHER" id="PTHR43591">
    <property type="entry name" value="METHYLTRANSFERASE"/>
    <property type="match status" value="1"/>
</dbReference>
<dbReference type="Pfam" id="PF01209">
    <property type="entry name" value="Ubie_methyltran"/>
    <property type="match status" value="1"/>
</dbReference>
<dbReference type="SUPFAM" id="SSF53335">
    <property type="entry name" value="S-adenosyl-L-methionine-dependent methyltransferases"/>
    <property type="match status" value="1"/>
</dbReference>
<dbReference type="PROSITE" id="PS51608">
    <property type="entry name" value="SAM_MT_UBIE"/>
    <property type="match status" value="1"/>
</dbReference>
<dbReference type="PROSITE" id="PS01183">
    <property type="entry name" value="UBIE_1"/>
    <property type="match status" value="1"/>
</dbReference>
<dbReference type="PROSITE" id="PS01184">
    <property type="entry name" value="UBIE_2"/>
    <property type="match status" value="1"/>
</dbReference>